<accession>A9KZW6</accession>
<comment type="function">
    <text evidence="1">Involved in mRNA degradation. Catalyzes the phosphorolysis of single-stranded polyribonucleotides processively in the 3'- to 5'-direction.</text>
</comment>
<comment type="catalytic activity">
    <reaction evidence="1">
        <text>RNA(n+1) + phosphate = RNA(n) + a ribonucleoside 5'-diphosphate</text>
        <dbReference type="Rhea" id="RHEA:22096"/>
        <dbReference type="Rhea" id="RHEA-COMP:14527"/>
        <dbReference type="Rhea" id="RHEA-COMP:17342"/>
        <dbReference type="ChEBI" id="CHEBI:43474"/>
        <dbReference type="ChEBI" id="CHEBI:57930"/>
        <dbReference type="ChEBI" id="CHEBI:140395"/>
        <dbReference type="EC" id="2.7.7.8"/>
    </reaction>
</comment>
<comment type="cofactor">
    <cofactor evidence="1">
        <name>Mg(2+)</name>
        <dbReference type="ChEBI" id="CHEBI:18420"/>
    </cofactor>
</comment>
<comment type="subunit">
    <text evidence="1">Component of the RNA degradosome, which is a multiprotein complex involved in RNA processing and mRNA degradation.</text>
</comment>
<comment type="subcellular location">
    <subcellularLocation>
        <location evidence="1">Cytoplasm</location>
    </subcellularLocation>
</comment>
<comment type="similarity">
    <text evidence="1">Belongs to the polyribonucleotide nucleotidyltransferase family.</text>
</comment>
<organism>
    <name type="scientific">Shewanella baltica (strain OS195)</name>
    <dbReference type="NCBI Taxonomy" id="399599"/>
    <lineage>
        <taxon>Bacteria</taxon>
        <taxon>Pseudomonadati</taxon>
        <taxon>Pseudomonadota</taxon>
        <taxon>Gammaproteobacteria</taxon>
        <taxon>Alteromonadales</taxon>
        <taxon>Shewanellaceae</taxon>
        <taxon>Shewanella</taxon>
    </lineage>
</organism>
<reference key="1">
    <citation type="submission" date="2007-11" db="EMBL/GenBank/DDBJ databases">
        <title>Complete sequence of chromosome of Shewanella baltica OS195.</title>
        <authorList>
            <consortium name="US DOE Joint Genome Institute"/>
            <person name="Copeland A."/>
            <person name="Lucas S."/>
            <person name="Lapidus A."/>
            <person name="Barry K."/>
            <person name="Glavina del Rio T."/>
            <person name="Dalin E."/>
            <person name="Tice H."/>
            <person name="Pitluck S."/>
            <person name="Chain P."/>
            <person name="Malfatti S."/>
            <person name="Shin M."/>
            <person name="Vergez L."/>
            <person name="Schmutz J."/>
            <person name="Larimer F."/>
            <person name="Land M."/>
            <person name="Hauser L."/>
            <person name="Kyrpides N."/>
            <person name="Kim E."/>
            <person name="Brettar I."/>
            <person name="Rodrigues J."/>
            <person name="Konstantinidis K."/>
            <person name="Klappenbach J."/>
            <person name="Hofle M."/>
            <person name="Tiedje J."/>
            <person name="Richardson P."/>
        </authorList>
    </citation>
    <scope>NUCLEOTIDE SEQUENCE [LARGE SCALE GENOMIC DNA]</scope>
    <source>
        <strain>OS195</strain>
    </source>
</reference>
<name>PNP_SHEB9</name>
<feature type="chain" id="PRO_1000087998" description="Polyribonucleotide nucleotidyltransferase">
    <location>
        <begin position="1"/>
        <end position="700"/>
    </location>
</feature>
<feature type="domain" description="KH" evidence="1">
    <location>
        <begin position="552"/>
        <end position="611"/>
    </location>
</feature>
<feature type="domain" description="S1 motif" evidence="1">
    <location>
        <begin position="621"/>
        <end position="689"/>
    </location>
</feature>
<feature type="binding site" evidence="1">
    <location>
        <position position="485"/>
    </location>
    <ligand>
        <name>Mg(2+)</name>
        <dbReference type="ChEBI" id="CHEBI:18420"/>
    </ligand>
</feature>
<feature type="binding site" evidence="1">
    <location>
        <position position="491"/>
    </location>
    <ligand>
        <name>Mg(2+)</name>
        <dbReference type="ChEBI" id="CHEBI:18420"/>
    </ligand>
</feature>
<proteinExistence type="inferred from homology"/>
<evidence type="ECO:0000255" key="1">
    <source>
        <dbReference type="HAMAP-Rule" id="MF_01595"/>
    </source>
</evidence>
<gene>
    <name evidence="1" type="primary">pnp</name>
    <name type="ordered locus">Sbal195_3412</name>
</gene>
<protein>
    <recommendedName>
        <fullName evidence="1">Polyribonucleotide nucleotidyltransferase</fullName>
        <ecNumber evidence="1">2.7.7.8</ecNumber>
    </recommendedName>
    <alternativeName>
        <fullName evidence="1">Polynucleotide phosphorylase</fullName>
        <shortName evidence="1">PNPase</shortName>
    </alternativeName>
</protein>
<sequence>MNPIVKSFEYGQHTVTLETGVIARQADAAVLASMGDTTVLVTVVGKKEADAGRDFFPLTVNYQEKTYAAGKIPGGFFKREGRPSEDETLIARLIDRPIRPLFPNGFKNEVQVIITVVSVDPQIEPDIISMIGTSAALAISGIPFSGPLGAARVGYIDGEYVLNPSVAQLATSQLNLVVAGTAGAVLMVESEAQALPEEVMLGSVVYGHDQQQVVIKAIAEFKAEAGKPTWDWTAPTQDADLVAQIKELAEAGLGDAYKIQVKQDRYAQVSVVKAATKEALLASNPSIDLREVDNLLGSLEKKVVRGRIIRGEPRIDGREPDMIRALSVLAGVLPRTHGSALFTRGETQALVTCTLGTERDAQKIDSIMGERTNRFMLHYNFPPYSVGETGMVGSPKRREIGHGKLAWRGINAVMPSAAEFPYSVRVVSEITESNGSSSMASVCGTSLALMDAGVPIKTSVAGIAMGLVKEGDDFVVLSDILGDEDHLGDMDFKVAGTRDGITALQMDIKIEGITKEIMDIALQQAYGARVHILNVMDQAIGSHRDDISDHAPRITVIKINPEKIRDVIGKGGAVIRALTEETGTTIELEDDGTVKIASSNGEATKEAIRRIEEITSEVEVGRIYNGKVIRIVDFGAFVNILPGKDGLVHISQISDERVANVSDHLELNQEVAVKVMEVDRQGRVRLSIKEAQTKETAAAE</sequence>
<keyword id="KW-0963">Cytoplasm</keyword>
<keyword id="KW-0460">Magnesium</keyword>
<keyword id="KW-0479">Metal-binding</keyword>
<keyword id="KW-0548">Nucleotidyltransferase</keyword>
<keyword id="KW-0694">RNA-binding</keyword>
<keyword id="KW-0808">Transferase</keyword>
<dbReference type="EC" id="2.7.7.8" evidence="1"/>
<dbReference type="EMBL" id="CP000891">
    <property type="protein sequence ID" value="ABX50574.1"/>
    <property type="molecule type" value="Genomic_DNA"/>
</dbReference>
<dbReference type="RefSeq" id="WP_006082711.1">
    <property type="nucleotide sequence ID" value="NC_009997.1"/>
</dbReference>
<dbReference type="SMR" id="A9KZW6"/>
<dbReference type="GeneID" id="11773454"/>
<dbReference type="KEGG" id="sbn:Sbal195_3412"/>
<dbReference type="HOGENOM" id="CLU_004217_2_2_6"/>
<dbReference type="Proteomes" id="UP000000770">
    <property type="component" value="Chromosome"/>
</dbReference>
<dbReference type="GO" id="GO:0005829">
    <property type="term" value="C:cytosol"/>
    <property type="evidence" value="ECO:0007669"/>
    <property type="project" value="TreeGrafter"/>
</dbReference>
<dbReference type="GO" id="GO:0000175">
    <property type="term" value="F:3'-5'-RNA exonuclease activity"/>
    <property type="evidence" value="ECO:0007669"/>
    <property type="project" value="TreeGrafter"/>
</dbReference>
<dbReference type="GO" id="GO:0000287">
    <property type="term" value="F:magnesium ion binding"/>
    <property type="evidence" value="ECO:0007669"/>
    <property type="project" value="UniProtKB-UniRule"/>
</dbReference>
<dbReference type="GO" id="GO:0004654">
    <property type="term" value="F:polyribonucleotide nucleotidyltransferase activity"/>
    <property type="evidence" value="ECO:0007669"/>
    <property type="project" value="UniProtKB-UniRule"/>
</dbReference>
<dbReference type="GO" id="GO:0003723">
    <property type="term" value="F:RNA binding"/>
    <property type="evidence" value="ECO:0007669"/>
    <property type="project" value="UniProtKB-UniRule"/>
</dbReference>
<dbReference type="GO" id="GO:0006402">
    <property type="term" value="P:mRNA catabolic process"/>
    <property type="evidence" value="ECO:0007669"/>
    <property type="project" value="UniProtKB-UniRule"/>
</dbReference>
<dbReference type="GO" id="GO:0006396">
    <property type="term" value="P:RNA processing"/>
    <property type="evidence" value="ECO:0007669"/>
    <property type="project" value="InterPro"/>
</dbReference>
<dbReference type="CDD" id="cd02393">
    <property type="entry name" value="KH-I_PNPase"/>
    <property type="match status" value="1"/>
</dbReference>
<dbReference type="CDD" id="cd11363">
    <property type="entry name" value="RNase_PH_PNPase_1"/>
    <property type="match status" value="1"/>
</dbReference>
<dbReference type="CDD" id="cd11364">
    <property type="entry name" value="RNase_PH_PNPase_2"/>
    <property type="match status" value="1"/>
</dbReference>
<dbReference type="CDD" id="cd04472">
    <property type="entry name" value="S1_PNPase"/>
    <property type="match status" value="1"/>
</dbReference>
<dbReference type="FunFam" id="2.40.50.140:FF:000023">
    <property type="entry name" value="Polyribonucleotide nucleotidyltransferase"/>
    <property type="match status" value="1"/>
</dbReference>
<dbReference type="FunFam" id="3.30.1370.10:FF:000001">
    <property type="entry name" value="Polyribonucleotide nucleotidyltransferase"/>
    <property type="match status" value="1"/>
</dbReference>
<dbReference type="FunFam" id="3.30.230.70:FF:000001">
    <property type="entry name" value="Polyribonucleotide nucleotidyltransferase"/>
    <property type="match status" value="1"/>
</dbReference>
<dbReference type="FunFam" id="3.30.230.70:FF:000002">
    <property type="entry name" value="Polyribonucleotide nucleotidyltransferase"/>
    <property type="match status" value="1"/>
</dbReference>
<dbReference type="Gene3D" id="3.30.230.70">
    <property type="entry name" value="GHMP Kinase, N-terminal domain"/>
    <property type="match status" value="2"/>
</dbReference>
<dbReference type="Gene3D" id="3.30.1370.10">
    <property type="entry name" value="K Homology domain, type 1"/>
    <property type="match status" value="1"/>
</dbReference>
<dbReference type="Gene3D" id="2.40.50.140">
    <property type="entry name" value="Nucleic acid-binding proteins"/>
    <property type="match status" value="1"/>
</dbReference>
<dbReference type="HAMAP" id="MF_01595">
    <property type="entry name" value="PNPase"/>
    <property type="match status" value="1"/>
</dbReference>
<dbReference type="InterPro" id="IPR001247">
    <property type="entry name" value="ExoRNase_PH_dom1"/>
</dbReference>
<dbReference type="InterPro" id="IPR015847">
    <property type="entry name" value="ExoRNase_PH_dom2"/>
</dbReference>
<dbReference type="InterPro" id="IPR036345">
    <property type="entry name" value="ExoRNase_PH_dom2_sf"/>
</dbReference>
<dbReference type="InterPro" id="IPR004087">
    <property type="entry name" value="KH_dom"/>
</dbReference>
<dbReference type="InterPro" id="IPR004088">
    <property type="entry name" value="KH_dom_type_1"/>
</dbReference>
<dbReference type="InterPro" id="IPR036612">
    <property type="entry name" value="KH_dom_type_1_sf"/>
</dbReference>
<dbReference type="InterPro" id="IPR012340">
    <property type="entry name" value="NA-bd_OB-fold"/>
</dbReference>
<dbReference type="InterPro" id="IPR012162">
    <property type="entry name" value="PNPase"/>
</dbReference>
<dbReference type="InterPro" id="IPR027408">
    <property type="entry name" value="PNPase/RNase_PH_dom_sf"/>
</dbReference>
<dbReference type="InterPro" id="IPR015848">
    <property type="entry name" value="PNPase_PH_RNA-bd_bac/org-type"/>
</dbReference>
<dbReference type="InterPro" id="IPR036456">
    <property type="entry name" value="PNPase_PH_RNA-bd_sf"/>
</dbReference>
<dbReference type="InterPro" id="IPR020568">
    <property type="entry name" value="Ribosomal_Su5_D2-typ_SF"/>
</dbReference>
<dbReference type="InterPro" id="IPR003029">
    <property type="entry name" value="S1_domain"/>
</dbReference>
<dbReference type="NCBIfam" id="TIGR03591">
    <property type="entry name" value="polynuc_phos"/>
    <property type="match status" value="1"/>
</dbReference>
<dbReference type="NCBIfam" id="NF008805">
    <property type="entry name" value="PRK11824.1"/>
    <property type="match status" value="1"/>
</dbReference>
<dbReference type="PANTHER" id="PTHR11252">
    <property type="entry name" value="POLYRIBONUCLEOTIDE NUCLEOTIDYLTRANSFERASE"/>
    <property type="match status" value="1"/>
</dbReference>
<dbReference type="PANTHER" id="PTHR11252:SF0">
    <property type="entry name" value="POLYRIBONUCLEOTIDE NUCLEOTIDYLTRANSFERASE 1, MITOCHONDRIAL"/>
    <property type="match status" value="1"/>
</dbReference>
<dbReference type="Pfam" id="PF00013">
    <property type="entry name" value="KH_1"/>
    <property type="match status" value="1"/>
</dbReference>
<dbReference type="Pfam" id="PF03726">
    <property type="entry name" value="PNPase"/>
    <property type="match status" value="1"/>
</dbReference>
<dbReference type="Pfam" id="PF01138">
    <property type="entry name" value="RNase_PH"/>
    <property type="match status" value="2"/>
</dbReference>
<dbReference type="Pfam" id="PF03725">
    <property type="entry name" value="RNase_PH_C"/>
    <property type="match status" value="2"/>
</dbReference>
<dbReference type="Pfam" id="PF00575">
    <property type="entry name" value="S1"/>
    <property type="match status" value="1"/>
</dbReference>
<dbReference type="PIRSF" id="PIRSF005499">
    <property type="entry name" value="PNPase"/>
    <property type="match status" value="1"/>
</dbReference>
<dbReference type="SMART" id="SM00322">
    <property type="entry name" value="KH"/>
    <property type="match status" value="1"/>
</dbReference>
<dbReference type="SMART" id="SM00316">
    <property type="entry name" value="S1"/>
    <property type="match status" value="1"/>
</dbReference>
<dbReference type="SUPFAM" id="SSF54791">
    <property type="entry name" value="Eukaryotic type KH-domain (KH-domain type I)"/>
    <property type="match status" value="1"/>
</dbReference>
<dbReference type="SUPFAM" id="SSF50249">
    <property type="entry name" value="Nucleic acid-binding proteins"/>
    <property type="match status" value="1"/>
</dbReference>
<dbReference type="SUPFAM" id="SSF46915">
    <property type="entry name" value="Polynucleotide phosphorylase/guanosine pentaphosphate synthase (PNPase/GPSI), domain 3"/>
    <property type="match status" value="1"/>
</dbReference>
<dbReference type="SUPFAM" id="SSF55666">
    <property type="entry name" value="Ribonuclease PH domain 2-like"/>
    <property type="match status" value="2"/>
</dbReference>
<dbReference type="SUPFAM" id="SSF54211">
    <property type="entry name" value="Ribosomal protein S5 domain 2-like"/>
    <property type="match status" value="2"/>
</dbReference>
<dbReference type="PROSITE" id="PS50084">
    <property type="entry name" value="KH_TYPE_1"/>
    <property type="match status" value="1"/>
</dbReference>
<dbReference type="PROSITE" id="PS50126">
    <property type="entry name" value="S1"/>
    <property type="match status" value="1"/>
</dbReference>